<proteinExistence type="evidence at protein level"/>
<sequence>MAASMARGGVSARVLLQAARGTWWNRPGGTSGSGEGVALGTTRKFQATGSRPAGEEDAGGPERPGDVVNVVFVDRSGQRIPVSGRVGDNVLHLAQRHGVDLEGACEASLACSTCHVYVSEDHLDLLPPPEEREDDMLDMAPLLQENSRLGCQIVLTPELEGAEFTLPKITRNFYVDGHVPKPH</sequence>
<feature type="transit peptide" description="Mitochondrion" evidence="3">
    <location>
        <begin position="1"/>
        <end position="52"/>
    </location>
</feature>
<feature type="chain" id="PRO_0000325952" description="Ferredoxin-2, mitochondrial">
    <location>
        <begin position="53"/>
        <end position="183"/>
    </location>
</feature>
<feature type="domain" description="2Fe-2S ferredoxin-type" evidence="4">
    <location>
        <begin position="68"/>
        <end position="170"/>
    </location>
</feature>
<feature type="region of interest" description="Disordered" evidence="5">
    <location>
        <begin position="45"/>
        <end position="65"/>
    </location>
</feature>
<feature type="binding site" evidence="4 12 18">
    <location>
        <position position="105"/>
    </location>
    <ligand>
        <name>[2Fe-2S] cluster</name>
        <dbReference type="ChEBI" id="CHEBI:190135"/>
    </ligand>
</feature>
<feature type="binding site" evidence="4 12 18">
    <location>
        <position position="111"/>
    </location>
    <ligand>
        <name>[2Fe-2S] cluster</name>
        <dbReference type="ChEBI" id="CHEBI:190135"/>
    </ligand>
</feature>
<feature type="binding site" evidence="4 12 18">
    <location>
        <position position="114"/>
    </location>
    <ligand>
        <name>[2Fe-2S] cluster</name>
        <dbReference type="ChEBI" id="CHEBI:190135"/>
    </ligand>
</feature>
<feature type="binding site" evidence="4 12 18">
    <location>
        <position position="151"/>
    </location>
    <ligand>
        <name>[2Fe-2S] cluster</name>
        <dbReference type="ChEBI" id="CHEBI:190135"/>
    </ligand>
</feature>
<feature type="splice variant" id="VSP_056826" description="In isoform 2." evidence="13">
    <original>EDDMLDMAPLLQENSRLGCQIVLTPELEGAEFTLPKITRNFYVDGHVPKPH</original>
    <variation>RTRGWAARLC</variation>
    <location>
        <begin position="133"/>
        <end position="183"/>
    </location>
</feature>
<feature type="sequence variant" id="VAR_082100" description="In MEOAL; strongly reduced protein expression in muscle in affected homozygous patients compared to control individuals; dbSNP:rs888630930." evidence="10">
    <original>P</original>
    <variation>L</variation>
    <location>
        <position position="141"/>
    </location>
</feature>
<feature type="sequence conflict" description="In Ref. 1; BAH13303." evidence="15" ref="1">
    <original>S</original>
    <variation>T</variation>
    <location>
        <position position="4"/>
    </location>
</feature>
<feature type="strand" evidence="19">
    <location>
        <begin position="67"/>
        <end position="73"/>
    </location>
</feature>
<feature type="strand" evidence="19">
    <location>
        <begin position="79"/>
        <end position="85"/>
    </location>
</feature>
<feature type="helix" evidence="19">
    <location>
        <begin position="90"/>
        <end position="96"/>
    </location>
</feature>
<feature type="strand" evidence="19">
    <location>
        <begin position="106"/>
        <end position="110"/>
    </location>
</feature>
<feature type="strand" evidence="19">
    <location>
        <begin position="115"/>
        <end position="118"/>
    </location>
</feature>
<feature type="helix" evidence="19">
    <location>
        <begin position="120"/>
        <end position="123"/>
    </location>
</feature>
<feature type="helix" evidence="19">
    <location>
        <begin position="131"/>
        <end position="138"/>
    </location>
</feature>
<feature type="strand" evidence="19">
    <location>
        <begin position="147"/>
        <end position="149"/>
    </location>
</feature>
<feature type="helix" evidence="19">
    <location>
        <begin position="150"/>
        <end position="152"/>
    </location>
</feature>
<feature type="helix" evidence="19">
    <location>
        <begin position="157"/>
        <end position="159"/>
    </location>
</feature>
<feature type="strand" evidence="19">
    <location>
        <begin position="163"/>
        <end position="165"/>
    </location>
</feature>
<comment type="function">
    <text evidence="2 8 11">Electron donor, of the core iron-sulfur cluster (ISC) assembly complex, that acts to reduce the persulfide into sulfide during [2Fe-2S] clusters assembly on the scaffolding protein ISCU (PubMed:28001042). The core iron-sulfur cluster (ISC) assembly complex is involved in the de novo synthesis of a [2Fe-2S] cluster, the first step of the mitochondrial iron-sulfur protein biogenesis (By similarity). This process is initiated by the cysteine desulfurase complex (NFS1:LYRM4:NDUFAB1) that produces persulfide which is delivered on the scaffold protein ISCU in a FXN-dependent manner (By similarity). Then this complex is stabilized by FDX2 which provides reducing equivalents to accomplish the [2Fe-2S] cluster assembly (By similarity). Finally, the [2Fe-2S] cluster is transferred from ISCU to chaperone proteins, including HSCB, HSPA9 and GLRX5 (By similarity). Essential for coenzyme Q biosynthesis: together with FDXR, transfers the electrons required for the hydroxylation reaction performed by COQ6 (PubMed:38425362).</text>
</comment>
<comment type="cofactor">
    <cofactor evidence="12 18">
        <name>[2Fe-2S] cluster</name>
        <dbReference type="ChEBI" id="CHEBI:190135"/>
    </cofactor>
    <text evidence="12 18">Binds 1 [2Fe-2S] cluster.</text>
</comment>
<comment type="subunit">
    <text evidence="8 9 16">Component of the mitochondrial core iron-sulfur cluster (ISC) complex composed of NFS1, LYRM4, NDUFAB1, ISCU, FXN, and FDX2; this complex is a heterohexamer containing two copies of each monomer (Probable). Form a heterodimer complex with NFS1 (PubMed:29097656). Interacts (in both their reduced and oxidized states) with the cysteine desulfurase complex; this interaction stimulates cysteine desulfurase activity, and serves as a reductant for Fe-S cluster assembly (PubMed:28001042).</text>
</comment>
<comment type="interaction">
    <interactant intactId="EBI-10252800">
        <id>Q6P4F2</id>
    </interactant>
    <interactant intactId="EBI-2865388">
        <id>Q969G2</id>
        <label>LHX4</label>
    </interactant>
    <organismsDiffer>false</organismsDiffer>
    <experiments>3</experiments>
</comment>
<comment type="interaction">
    <interactant intactId="EBI-10252800">
        <id>Q6P4F2</id>
    </interactant>
    <interactant intactId="EBI-16439278">
        <id>Q6FHY5</id>
        <label>MEOX2</label>
    </interactant>
    <organismsDiffer>false</organismsDiffer>
    <experiments>3</experiments>
</comment>
<comment type="subcellular location">
    <subcellularLocation>
        <location evidence="6 7">Mitochondrion</location>
    </subcellularLocation>
    <subcellularLocation>
        <location evidence="1">Mitochondrion matrix</location>
    </subcellularLocation>
</comment>
<comment type="alternative products">
    <event type="alternative splicing"/>
    <isoform>
        <id>Q6P4F2-1</id>
        <name>1</name>
        <sequence type="displayed"/>
    </isoform>
    <isoform>
        <id>Q6P4F2-2</id>
        <name>2</name>
        <sequence type="described" ref="VSP_056826"/>
    </isoform>
</comment>
<comment type="tissue specificity">
    <text evidence="6 7 10">Widely expressed, with highest levels in testis, kidney and brain (at protein level) (PubMed:20547883). Expressed in muscle (at protein level) (PubMed:24281368, PubMed:30010796). Expressed in fibroblasts (at protein level) (PubMed:24281368).</text>
</comment>
<comment type="disease" evidence="7 10">
    <disease id="DI-05521">
        <name>Mitochondrial myopathy, episodic, with optic atrophy and reversible leukoencephalopathy</name>
        <acronym>MEOAL</acronym>
        <description>An autosomal recessive neuromuscular disorder characterized by childhood onset of recurrent episodes of proximal weakness and myalgia often precipitated by exercise, infections or low temperature. Additional features are optic atrophy, axonal polyneuropathy, and reversible or partially reversible leukoencephalopathy.</description>
        <dbReference type="MIM" id="251900"/>
    </disease>
    <text>The disease is caused by variants affecting the gene represented in this entry.</text>
</comment>
<comment type="miscellaneous">
    <molecule>Isoform 2</molecule>
    <text evidence="15">May be produced at very low levels due to a premature stop codon in the mRNA, leading to nonsense-mediated mRNA decay.</text>
</comment>
<comment type="similarity">
    <text evidence="15">Belongs to the adrenodoxin/putidaredoxin family.</text>
</comment>
<comment type="sequence caution" evidence="15">
    <conflict type="erroneous initiation">
        <sequence resource="EMBL-CDS" id="BAC04929"/>
    </conflict>
    <text>Extended N-terminus.</text>
</comment>
<comment type="sequence caution" evidence="15">
    <conflict type="erroneous initiation">
        <sequence resource="EMBL-CDS" id="BAH13303"/>
    </conflict>
    <text>Extended N-terminus.</text>
</comment>
<protein>
    <recommendedName>
        <fullName evidence="14">Ferredoxin-2, mitochondrial</fullName>
    </recommendedName>
    <alternativeName>
        <fullName>Adrenodoxin-like protein</fullName>
    </alternativeName>
    <alternativeName>
        <fullName>Ferredoxin-1-like protein</fullName>
    </alternativeName>
</protein>
<dbReference type="EMBL" id="AK097022">
    <property type="protein sequence ID" value="BAC04929.1"/>
    <property type="status" value="ALT_INIT"/>
    <property type="molecule type" value="mRNA"/>
</dbReference>
<dbReference type="EMBL" id="AK300568">
    <property type="protein sequence ID" value="BAH13303.1"/>
    <property type="status" value="ALT_INIT"/>
    <property type="molecule type" value="mRNA"/>
</dbReference>
<dbReference type="EMBL" id="AC011511">
    <property type="status" value="NOT_ANNOTATED_CDS"/>
    <property type="molecule type" value="Genomic_DNA"/>
</dbReference>
<dbReference type="EMBL" id="BC063460">
    <property type="protein sequence ID" value="AAH63460.1"/>
    <property type="molecule type" value="mRNA"/>
</dbReference>
<dbReference type="CCDS" id="CCDS32905.3">
    <molecule id="Q6P4F2-1"/>
</dbReference>
<dbReference type="RefSeq" id="NP_001026904.2">
    <property type="nucleotide sequence ID" value="NM_001031734.3"/>
</dbReference>
<dbReference type="RefSeq" id="NP_001384335.1">
    <molecule id="Q6P4F2-1"/>
    <property type="nucleotide sequence ID" value="NM_001397406.1"/>
</dbReference>
<dbReference type="PDB" id="2Y5C">
    <property type="method" value="X-ray"/>
    <property type="resolution" value="1.70 A"/>
    <property type="chains" value="A/B=66-171"/>
</dbReference>
<dbReference type="PDB" id="8RMC">
    <property type="method" value="EM"/>
    <property type="resolution" value="2.26 A"/>
    <property type="chains" value="I=66-183"/>
</dbReference>
<dbReference type="PDB" id="8RMD">
    <property type="method" value="EM"/>
    <property type="resolution" value="2.52 A"/>
    <property type="chains" value="I=66-183"/>
</dbReference>
<dbReference type="PDB" id="8RMF">
    <property type="method" value="EM"/>
    <property type="resolution" value="2.33 A"/>
    <property type="chains" value="I=65-183"/>
</dbReference>
<dbReference type="PDB" id="8RMG">
    <property type="method" value="EM"/>
    <property type="resolution" value="2.46 A"/>
    <property type="chains" value="I=65-183"/>
</dbReference>
<dbReference type="PDBsum" id="2Y5C"/>
<dbReference type="PDBsum" id="8RMC"/>
<dbReference type="PDBsum" id="8RMD"/>
<dbReference type="PDBsum" id="8RMF"/>
<dbReference type="PDBsum" id="8RMG"/>
<dbReference type="EMDB" id="EMD-19356"/>
<dbReference type="EMDB" id="EMD-19357"/>
<dbReference type="EMDB" id="EMD-19360"/>
<dbReference type="EMDB" id="EMD-19361"/>
<dbReference type="SMR" id="Q6P4F2"/>
<dbReference type="ComplexPortal" id="CPX-5641">
    <property type="entry name" value="Mitochondrial NIAUFX iron-sulfur cluster assembly complex"/>
</dbReference>
<dbReference type="FunCoup" id="Q6P4F2">
    <property type="interactions" value="1162"/>
</dbReference>
<dbReference type="IntAct" id="Q6P4F2">
    <property type="interactions" value="4"/>
</dbReference>
<dbReference type="STRING" id="9606.ENSP00000377311"/>
<dbReference type="PhosphoSitePlus" id="Q6P4F2"/>
<dbReference type="BioMuta" id="FDX2"/>
<dbReference type="DMDM" id="74749111"/>
<dbReference type="jPOST" id="Q6P4F2"/>
<dbReference type="MassIVE" id="Q6P4F2"/>
<dbReference type="PaxDb" id="9606-ENSP00000377311"/>
<dbReference type="PeptideAtlas" id="Q6P4F2"/>
<dbReference type="ProteomicsDB" id="66974">
    <molecule id="Q6P4F2-1"/>
</dbReference>
<dbReference type="ProteomicsDB" id="72397"/>
<dbReference type="Pumba" id="Q6P4F2"/>
<dbReference type="Antibodypedia" id="76687">
    <property type="antibodies" value="7 antibodies from 6 providers"/>
</dbReference>
<dbReference type="DNASU" id="112812"/>
<dbReference type="Ensembl" id="ENST00000393708.3">
    <molecule id="Q6P4F2-1"/>
    <property type="protein sequence ID" value="ENSP00000377311.5"/>
    <property type="gene ID" value="ENSG00000267673.7"/>
</dbReference>
<dbReference type="GeneID" id="112812"/>
<dbReference type="MANE-Select" id="ENST00000393708.3">
    <property type="protein sequence ID" value="ENSP00000377311.5"/>
    <property type="RefSeq nucleotide sequence ID" value="NM_001397406.1"/>
    <property type="RefSeq protein sequence ID" value="NP_001384335.1"/>
</dbReference>
<dbReference type="UCSC" id="uc002mny.2">
    <molecule id="Q6P4F2-1"/>
    <property type="organism name" value="human"/>
</dbReference>
<dbReference type="AGR" id="HGNC:30546"/>
<dbReference type="CTD" id="112812"/>
<dbReference type="DisGeNET" id="112812"/>
<dbReference type="GeneCards" id="FDX2"/>
<dbReference type="HGNC" id="HGNC:30546">
    <property type="gene designation" value="FDX2"/>
</dbReference>
<dbReference type="HPA" id="ENSG00000267673">
    <property type="expression patterns" value="Low tissue specificity"/>
</dbReference>
<dbReference type="MalaCards" id="FDX2"/>
<dbReference type="MIM" id="251900">
    <property type="type" value="phenotype"/>
</dbReference>
<dbReference type="MIM" id="614585">
    <property type="type" value="gene"/>
</dbReference>
<dbReference type="neXtProt" id="NX_Q6P4F2"/>
<dbReference type="OpenTargets" id="ENSG00000267673"/>
<dbReference type="PharmGKB" id="PA162388212"/>
<dbReference type="VEuPathDB" id="HostDB:ENSG00000267673"/>
<dbReference type="eggNOG" id="KOG3309">
    <property type="taxonomic scope" value="Eukaryota"/>
</dbReference>
<dbReference type="GeneTree" id="ENSGT00940000161143"/>
<dbReference type="HOGENOM" id="CLU_082632_0_2_1"/>
<dbReference type="InParanoid" id="Q6P4F2"/>
<dbReference type="OrthoDB" id="268593at2759"/>
<dbReference type="PAN-GO" id="Q6P4F2">
    <property type="GO annotations" value="4 GO annotations based on evolutionary models"/>
</dbReference>
<dbReference type="PhylomeDB" id="Q6P4F2"/>
<dbReference type="TreeFam" id="TF354319"/>
<dbReference type="PathwayCommons" id="Q6P4F2"/>
<dbReference type="Reactome" id="R-HSA-1362409">
    <property type="pathway name" value="Mitochondrial iron-sulfur cluster biogenesis"/>
</dbReference>
<dbReference type="Reactome" id="R-HSA-196108">
    <property type="pathway name" value="Pregnenolone biosynthesis"/>
</dbReference>
<dbReference type="Reactome" id="R-HSA-211976">
    <property type="pathway name" value="Endogenous sterols"/>
</dbReference>
<dbReference type="Reactome" id="R-HSA-2395516">
    <property type="pathway name" value="Electron transport from NADPH to Ferredoxin"/>
</dbReference>
<dbReference type="Reactome" id="R-HSA-5579026">
    <property type="pathway name" value="Defective CYP11A1 causes AICSR"/>
</dbReference>
<dbReference type="SignaLink" id="Q6P4F2"/>
<dbReference type="BioGRID-ORCS" id="112812">
    <property type="hits" value="490 hits in 1177 CRISPR screens"/>
</dbReference>
<dbReference type="ChiTaRS" id="FDX1L">
    <property type="organism name" value="human"/>
</dbReference>
<dbReference type="EvolutionaryTrace" id="Q6P4F2"/>
<dbReference type="GenomeRNAi" id="112812"/>
<dbReference type="Pharos" id="Q6P4F2">
    <property type="development level" value="Tdark"/>
</dbReference>
<dbReference type="PRO" id="PR:Q6P4F2"/>
<dbReference type="Proteomes" id="UP000005640">
    <property type="component" value="Chromosome 19"/>
</dbReference>
<dbReference type="RNAct" id="Q6P4F2">
    <property type="molecule type" value="protein"/>
</dbReference>
<dbReference type="Bgee" id="ENSG00000267673">
    <property type="expression patterns" value="Expressed in prefrontal cortex and 102 other cell types or tissues"/>
</dbReference>
<dbReference type="ExpressionAtlas" id="Q6P4F2">
    <property type="expression patterns" value="baseline and differential"/>
</dbReference>
<dbReference type="GO" id="GO:1990229">
    <property type="term" value="C:iron-sulfur cluster assembly complex"/>
    <property type="evidence" value="ECO:0000303"/>
    <property type="project" value="ComplexPortal"/>
</dbReference>
<dbReference type="GO" id="GO:0005759">
    <property type="term" value="C:mitochondrial matrix"/>
    <property type="evidence" value="ECO:0000304"/>
    <property type="project" value="Reactome"/>
</dbReference>
<dbReference type="GO" id="GO:0005739">
    <property type="term" value="C:mitochondrion"/>
    <property type="evidence" value="ECO:0006056"/>
    <property type="project" value="FlyBase"/>
</dbReference>
<dbReference type="GO" id="GO:0051537">
    <property type="term" value="F:2 iron, 2 sulfur cluster binding"/>
    <property type="evidence" value="ECO:0007669"/>
    <property type="project" value="UniProtKB-KW"/>
</dbReference>
<dbReference type="GO" id="GO:0009055">
    <property type="term" value="F:electron transfer activity"/>
    <property type="evidence" value="ECO:0000314"/>
    <property type="project" value="UniProt"/>
</dbReference>
<dbReference type="GO" id="GO:0046872">
    <property type="term" value="F:metal ion binding"/>
    <property type="evidence" value="ECO:0007669"/>
    <property type="project" value="UniProtKB-KW"/>
</dbReference>
<dbReference type="GO" id="GO:0044571">
    <property type="term" value="P:[2Fe-2S] cluster assembly"/>
    <property type="evidence" value="ECO:0000314"/>
    <property type="project" value="UniProtKB"/>
</dbReference>
<dbReference type="GO" id="GO:0044572">
    <property type="term" value="P:[4Fe-4S] cluster assembly"/>
    <property type="evidence" value="ECO:0000314"/>
    <property type="project" value="UniProtKB"/>
</dbReference>
<dbReference type="GO" id="GO:0022900">
    <property type="term" value="P:electron transport chain"/>
    <property type="evidence" value="ECO:0000318"/>
    <property type="project" value="GO_Central"/>
</dbReference>
<dbReference type="GO" id="GO:0016226">
    <property type="term" value="P:iron-sulfur cluster assembly"/>
    <property type="evidence" value="ECO:0000303"/>
    <property type="project" value="ComplexPortal"/>
</dbReference>
<dbReference type="GO" id="GO:0140647">
    <property type="term" value="P:P450-containing electron transport chain"/>
    <property type="evidence" value="ECO:0007669"/>
    <property type="project" value="InterPro"/>
</dbReference>
<dbReference type="GO" id="GO:0006744">
    <property type="term" value="P:ubiquinone biosynthetic process"/>
    <property type="evidence" value="ECO:0000314"/>
    <property type="project" value="UniProt"/>
</dbReference>
<dbReference type="CDD" id="cd00207">
    <property type="entry name" value="fer2"/>
    <property type="match status" value="1"/>
</dbReference>
<dbReference type="FunFam" id="3.10.20.30:FF:000013">
    <property type="entry name" value="Adrenodoxin, mitochondrial"/>
    <property type="match status" value="1"/>
</dbReference>
<dbReference type="Gene3D" id="3.10.20.30">
    <property type="match status" value="1"/>
</dbReference>
<dbReference type="InterPro" id="IPR036010">
    <property type="entry name" value="2Fe-2S_ferredoxin-like_sf"/>
</dbReference>
<dbReference type="InterPro" id="IPR001041">
    <property type="entry name" value="2Fe-2S_ferredoxin-type"/>
</dbReference>
<dbReference type="InterPro" id="IPR001055">
    <property type="entry name" value="Adrenodoxin-like"/>
</dbReference>
<dbReference type="InterPro" id="IPR018298">
    <property type="entry name" value="Adrenodoxin_Fe-S_BS"/>
</dbReference>
<dbReference type="InterPro" id="IPR012675">
    <property type="entry name" value="Beta-grasp_dom_sf"/>
</dbReference>
<dbReference type="PANTHER" id="PTHR23426:SF65">
    <property type="entry name" value="FERREDOXIN-2, MITOCHONDRIAL"/>
    <property type="match status" value="1"/>
</dbReference>
<dbReference type="PANTHER" id="PTHR23426">
    <property type="entry name" value="FERREDOXIN/ADRENODOXIN"/>
    <property type="match status" value="1"/>
</dbReference>
<dbReference type="Pfam" id="PF00111">
    <property type="entry name" value="Fer2"/>
    <property type="match status" value="1"/>
</dbReference>
<dbReference type="PRINTS" id="PR00355">
    <property type="entry name" value="ADRENODOXIN"/>
</dbReference>
<dbReference type="SUPFAM" id="SSF54292">
    <property type="entry name" value="2Fe-2S ferredoxin-like"/>
    <property type="match status" value="1"/>
</dbReference>
<dbReference type="PROSITE" id="PS51085">
    <property type="entry name" value="2FE2S_FER_2"/>
    <property type="match status" value="1"/>
</dbReference>
<dbReference type="PROSITE" id="PS00814">
    <property type="entry name" value="ADX"/>
    <property type="match status" value="1"/>
</dbReference>
<gene>
    <name evidence="17" type="primary">FDX2</name>
    <name type="synonym">FDX1L</name>
</gene>
<organism>
    <name type="scientific">Homo sapiens</name>
    <name type="common">Human</name>
    <dbReference type="NCBI Taxonomy" id="9606"/>
    <lineage>
        <taxon>Eukaryota</taxon>
        <taxon>Metazoa</taxon>
        <taxon>Chordata</taxon>
        <taxon>Craniata</taxon>
        <taxon>Vertebrata</taxon>
        <taxon>Euteleostomi</taxon>
        <taxon>Mammalia</taxon>
        <taxon>Eutheria</taxon>
        <taxon>Euarchontoglires</taxon>
        <taxon>Primates</taxon>
        <taxon>Haplorrhini</taxon>
        <taxon>Catarrhini</taxon>
        <taxon>Hominidae</taxon>
        <taxon>Homo</taxon>
    </lineage>
</organism>
<reference key="1">
    <citation type="journal article" date="2004" name="Nat. Genet.">
        <title>Complete sequencing and characterization of 21,243 full-length human cDNAs.</title>
        <authorList>
            <person name="Ota T."/>
            <person name="Suzuki Y."/>
            <person name="Nishikawa T."/>
            <person name="Otsuki T."/>
            <person name="Sugiyama T."/>
            <person name="Irie R."/>
            <person name="Wakamatsu A."/>
            <person name="Hayashi K."/>
            <person name="Sato H."/>
            <person name="Nagai K."/>
            <person name="Kimura K."/>
            <person name="Makita H."/>
            <person name="Sekine M."/>
            <person name="Obayashi M."/>
            <person name="Nishi T."/>
            <person name="Shibahara T."/>
            <person name="Tanaka T."/>
            <person name="Ishii S."/>
            <person name="Yamamoto J."/>
            <person name="Saito K."/>
            <person name="Kawai Y."/>
            <person name="Isono Y."/>
            <person name="Nakamura Y."/>
            <person name="Nagahari K."/>
            <person name="Murakami K."/>
            <person name="Yasuda T."/>
            <person name="Iwayanagi T."/>
            <person name="Wagatsuma M."/>
            <person name="Shiratori A."/>
            <person name="Sudo H."/>
            <person name="Hosoiri T."/>
            <person name="Kaku Y."/>
            <person name="Kodaira H."/>
            <person name="Kondo H."/>
            <person name="Sugawara M."/>
            <person name="Takahashi M."/>
            <person name="Kanda K."/>
            <person name="Yokoi T."/>
            <person name="Furuya T."/>
            <person name="Kikkawa E."/>
            <person name="Omura Y."/>
            <person name="Abe K."/>
            <person name="Kamihara K."/>
            <person name="Katsuta N."/>
            <person name="Sato K."/>
            <person name="Tanikawa M."/>
            <person name="Yamazaki M."/>
            <person name="Ninomiya K."/>
            <person name="Ishibashi T."/>
            <person name="Yamashita H."/>
            <person name="Murakawa K."/>
            <person name="Fujimori K."/>
            <person name="Tanai H."/>
            <person name="Kimata M."/>
            <person name="Watanabe M."/>
            <person name="Hiraoka S."/>
            <person name="Chiba Y."/>
            <person name="Ishida S."/>
            <person name="Ono Y."/>
            <person name="Takiguchi S."/>
            <person name="Watanabe S."/>
            <person name="Yosida M."/>
            <person name="Hotuta T."/>
            <person name="Kusano J."/>
            <person name="Kanehori K."/>
            <person name="Takahashi-Fujii A."/>
            <person name="Hara H."/>
            <person name="Tanase T.-O."/>
            <person name="Nomura Y."/>
            <person name="Togiya S."/>
            <person name="Komai F."/>
            <person name="Hara R."/>
            <person name="Takeuchi K."/>
            <person name="Arita M."/>
            <person name="Imose N."/>
            <person name="Musashino K."/>
            <person name="Yuuki H."/>
            <person name="Oshima A."/>
            <person name="Sasaki N."/>
            <person name="Aotsuka S."/>
            <person name="Yoshikawa Y."/>
            <person name="Matsunawa H."/>
            <person name="Ichihara T."/>
            <person name="Shiohata N."/>
            <person name="Sano S."/>
            <person name="Moriya S."/>
            <person name="Momiyama H."/>
            <person name="Satoh N."/>
            <person name="Takami S."/>
            <person name="Terashima Y."/>
            <person name="Suzuki O."/>
            <person name="Nakagawa S."/>
            <person name="Senoh A."/>
            <person name="Mizoguchi H."/>
            <person name="Goto Y."/>
            <person name="Shimizu F."/>
            <person name="Wakebe H."/>
            <person name="Hishigaki H."/>
            <person name="Watanabe T."/>
            <person name="Sugiyama A."/>
            <person name="Takemoto M."/>
            <person name="Kawakami B."/>
            <person name="Yamazaki M."/>
            <person name="Watanabe K."/>
            <person name="Kumagai A."/>
            <person name="Itakura S."/>
            <person name="Fukuzumi Y."/>
            <person name="Fujimori Y."/>
            <person name="Komiyama M."/>
            <person name="Tashiro H."/>
            <person name="Tanigami A."/>
            <person name="Fujiwara T."/>
            <person name="Ono T."/>
            <person name="Yamada K."/>
            <person name="Fujii Y."/>
            <person name="Ozaki K."/>
            <person name="Hirao M."/>
            <person name="Ohmori Y."/>
            <person name="Kawabata A."/>
            <person name="Hikiji T."/>
            <person name="Kobatake N."/>
            <person name="Inagaki H."/>
            <person name="Ikema Y."/>
            <person name="Okamoto S."/>
            <person name="Okitani R."/>
            <person name="Kawakami T."/>
            <person name="Noguchi S."/>
            <person name="Itoh T."/>
            <person name="Shigeta K."/>
            <person name="Senba T."/>
            <person name="Matsumura K."/>
            <person name="Nakajima Y."/>
            <person name="Mizuno T."/>
            <person name="Morinaga M."/>
            <person name="Sasaki M."/>
            <person name="Togashi T."/>
            <person name="Oyama M."/>
            <person name="Hata H."/>
            <person name="Watanabe M."/>
            <person name="Komatsu T."/>
            <person name="Mizushima-Sugano J."/>
            <person name="Satoh T."/>
            <person name="Shirai Y."/>
            <person name="Takahashi Y."/>
            <person name="Nakagawa K."/>
            <person name="Okumura K."/>
            <person name="Nagase T."/>
            <person name="Nomura N."/>
            <person name="Kikuchi H."/>
            <person name="Masuho Y."/>
            <person name="Yamashita R."/>
            <person name="Nakai K."/>
            <person name="Yada T."/>
            <person name="Nakamura Y."/>
            <person name="Ohara O."/>
            <person name="Isogai T."/>
            <person name="Sugano S."/>
        </authorList>
    </citation>
    <scope>NUCLEOTIDE SEQUENCE [LARGE SCALE MRNA] (ISOFORMS 1 AND 2)</scope>
    <source>
        <tissue>Small intestine</tissue>
    </source>
</reference>
<reference key="2">
    <citation type="journal article" date="2004" name="Nature">
        <title>The DNA sequence and biology of human chromosome 19.</title>
        <authorList>
            <person name="Grimwood J."/>
            <person name="Gordon L.A."/>
            <person name="Olsen A.S."/>
            <person name="Terry A."/>
            <person name="Schmutz J."/>
            <person name="Lamerdin J.E."/>
            <person name="Hellsten U."/>
            <person name="Goodstein D."/>
            <person name="Couronne O."/>
            <person name="Tran-Gyamfi M."/>
            <person name="Aerts A."/>
            <person name="Altherr M."/>
            <person name="Ashworth L."/>
            <person name="Bajorek E."/>
            <person name="Black S."/>
            <person name="Branscomb E."/>
            <person name="Caenepeel S."/>
            <person name="Carrano A.V."/>
            <person name="Caoile C."/>
            <person name="Chan Y.M."/>
            <person name="Christensen M."/>
            <person name="Cleland C.A."/>
            <person name="Copeland A."/>
            <person name="Dalin E."/>
            <person name="Dehal P."/>
            <person name="Denys M."/>
            <person name="Detter J.C."/>
            <person name="Escobar J."/>
            <person name="Flowers D."/>
            <person name="Fotopulos D."/>
            <person name="Garcia C."/>
            <person name="Georgescu A.M."/>
            <person name="Glavina T."/>
            <person name="Gomez M."/>
            <person name="Gonzales E."/>
            <person name="Groza M."/>
            <person name="Hammon N."/>
            <person name="Hawkins T."/>
            <person name="Haydu L."/>
            <person name="Ho I."/>
            <person name="Huang W."/>
            <person name="Israni S."/>
            <person name="Jett J."/>
            <person name="Kadner K."/>
            <person name="Kimball H."/>
            <person name="Kobayashi A."/>
            <person name="Larionov V."/>
            <person name="Leem S.-H."/>
            <person name="Lopez F."/>
            <person name="Lou Y."/>
            <person name="Lowry S."/>
            <person name="Malfatti S."/>
            <person name="Martinez D."/>
            <person name="McCready P.M."/>
            <person name="Medina C."/>
            <person name="Morgan J."/>
            <person name="Nelson K."/>
            <person name="Nolan M."/>
            <person name="Ovcharenko I."/>
            <person name="Pitluck S."/>
            <person name="Pollard M."/>
            <person name="Popkie A.P."/>
            <person name="Predki P."/>
            <person name="Quan G."/>
            <person name="Ramirez L."/>
            <person name="Rash S."/>
            <person name="Retterer J."/>
            <person name="Rodriguez A."/>
            <person name="Rogers S."/>
            <person name="Salamov A."/>
            <person name="Salazar A."/>
            <person name="She X."/>
            <person name="Smith D."/>
            <person name="Slezak T."/>
            <person name="Solovyev V."/>
            <person name="Thayer N."/>
            <person name="Tice H."/>
            <person name="Tsai M."/>
            <person name="Ustaszewska A."/>
            <person name="Vo N."/>
            <person name="Wagner M."/>
            <person name="Wheeler J."/>
            <person name="Wu K."/>
            <person name="Xie G."/>
            <person name="Yang J."/>
            <person name="Dubchak I."/>
            <person name="Furey T.S."/>
            <person name="DeJong P."/>
            <person name="Dickson M."/>
            <person name="Gordon D."/>
            <person name="Eichler E.E."/>
            <person name="Pennacchio L.A."/>
            <person name="Richardson P."/>
            <person name="Stubbs L."/>
            <person name="Rokhsar D.S."/>
            <person name="Myers R.M."/>
            <person name="Rubin E.M."/>
            <person name="Lucas S.M."/>
        </authorList>
    </citation>
    <scope>NUCLEOTIDE SEQUENCE [LARGE SCALE GENOMIC DNA]</scope>
</reference>
<reference key="3">
    <citation type="journal article" date="2004" name="Genome Res.">
        <title>The status, quality, and expansion of the NIH full-length cDNA project: the Mammalian Gene Collection (MGC).</title>
        <authorList>
            <consortium name="The MGC Project Team"/>
        </authorList>
    </citation>
    <scope>NUCLEOTIDE SEQUENCE [LARGE SCALE MRNA] (ISOFORM 1)</scope>
    <source>
        <tissue>Brain</tissue>
    </source>
</reference>
<reference key="4">
    <citation type="journal article" date="2010" name="Proc. Natl. Acad. Sci. U.S.A.">
        <title>Humans possess two mitochondrial ferredoxins, Fdx1 and Fdx2, with distinct roles in steroidogenesis, heme, and Fe/S cluster biosynthesis.</title>
        <authorList>
            <person name="Sheftel A.D."/>
            <person name="Stehling O."/>
            <person name="Pierik A.J."/>
            <person name="Elsasser H.P."/>
            <person name="Muhlenhoff U."/>
            <person name="Webert H."/>
            <person name="Hobler A."/>
            <person name="Hannemann F."/>
            <person name="Bernhardt R."/>
            <person name="Lill R."/>
        </authorList>
    </citation>
    <scope>FUNCTION</scope>
    <scope>SUBCELLULAR LOCATION</scope>
    <scope>TISSUE SPECIFICITY</scope>
</reference>
<reference key="5">
    <citation type="journal article" date="2014" name="J. Proteomics">
        <title>An enzyme assisted RP-RPLC approach for in-depth analysis of human liver phosphoproteome.</title>
        <authorList>
            <person name="Bian Y."/>
            <person name="Song C."/>
            <person name="Cheng K."/>
            <person name="Dong M."/>
            <person name="Wang F."/>
            <person name="Huang J."/>
            <person name="Sun D."/>
            <person name="Wang L."/>
            <person name="Ye M."/>
            <person name="Zou H."/>
        </authorList>
    </citation>
    <scope>IDENTIFICATION BY MASS SPECTROMETRY [LARGE SCALE ANALYSIS]</scope>
    <source>
        <tissue>Liver</tissue>
    </source>
</reference>
<reference key="6">
    <citation type="journal article" date="2017" name="Biochemistry">
        <title>Human Mitochondrial Ferredoxin 1 (FDX1) and Ferredoxin 2 (FDX2) Both Bind Cysteine Desulfurase and Donate Electrons for Iron-Sulfur Cluster Biosynthesis.</title>
        <authorList>
            <person name="Cai K."/>
            <person name="Tonelli M."/>
            <person name="Frederick R.O."/>
            <person name="Markley J.L."/>
        </authorList>
    </citation>
    <scope>SUBUNIT</scope>
    <scope>FUNCTION</scope>
</reference>
<reference key="7">
    <citation type="journal article" date="2017" name="Nat. Commun.">
        <title>Structure and functional dynamics of the mitochondrial Fe/S cluster synthesis complex.</title>
        <authorList>
            <person name="Boniecki M.T."/>
            <person name="Freibert S.A."/>
            <person name="Muhlenhoff U."/>
            <person name="Lill R."/>
            <person name="Cygler M."/>
        </authorList>
    </citation>
    <scope>INTERACTION WITH NFS1</scope>
</reference>
<reference key="8">
    <citation type="journal article" date="2024" name="Nat. Catal.">
        <title>In vitro construction of the COQ metabolon unveils the molecular determinants of coenzyme Q biosynthesis.</title>
        <authorList>
            <person name="Nicoll C.R."/>
            <person name="Alvigini L."/>
            <person name="Gottinger A."/>
            <person name="Cecchini D."/>
            <person name="Mannucci B."/>
            <person name="Corana F."/>
            <person name="Mascotti M.L."/>
            <person name="Mattevi A."/>
        </authorList>
    </citation>
    <scope>FUNCTION</scope>
</reference>
<reference key="9">
    <citation type="submission" date="2011-01" db="PDB data bank">
        <title>Structure and functional studies on human mitochondrial ferredoxins.</title>
        <authorList>
            <person name="Webert H."/>
            <person name="Hobler A."/>
            <person name="Sheftel A.D."/>
            <person name="Molik S."/>
            <person name="Maestre-Reyna M."/>
            <person name="Essen L.-O."/>
            <person name="Vorniscescu D."/>
            <person name="Keusgen M."/>
            <person name="Hannemann F."/>
            <person name="Bernhardt R."/>
            <person name="Lill R."/>
        </authorList>
    </citation>
    <scope>X-RAY CRYSTALLOGRAPHY (1.70 ANGSTROMS) OF 66-171 IN COMPLEX WITH IRON-SULFUR (2FE-2S)</scope>
    <scope>COFACTOR</scope>
</reference>
<reference key="10">
    <citation type="journal article" date="2014" name="Eur. J. Hum. Genet.">
        <title>Deleterious mutation in FDX1L gene is associated with a novel mitochondrial muscle myopathy.</title>
        <authorList>
            <person name="Spiegel R."/>
            <person name="Saada A."/>
            <person name="Halvardson J."/>
            <person name="Soiferman D."/>
            <person name="Shaag A."/>
            <person name="Edvardson S."/>
            <person name="Horovitz Y."/>
            <person name="Khayat M."/>
            <person name="Shalev S.A."/>
            <person name="Feuk L."/>
            <person name="Elpeleg O."/>
        </authorList>
    </citation>
    <scope>INVOLVEMENT IN MEOAL</scope>
    <scope>SUBCELLULAR LOCATION</scope>
    <scope>TISSUE SPECIFICITY</scope>
</reference>
<reference key="11">
    <citation type="journal article" date="2018" name="Brain">
        <title>A novel complex neurological phenotype due to a homozygous mutation in FDX2.</title>
        <authorList>
            <person name="Gurgel-Giannetti J."/>
            <person name="Lynch D.S."/>
            <person name="Paiva A.R.B."/>
            <person name="Lucato L.T."/>
            <person name="Yamamoto G."/>
            <person name="Thomsen C."/>
            <person name="Basu S."/>
            <person name="Freua F."/>
            <person name="Giannetti A.V."/>
            <person name="de Assis B.D.R."/>
            <person name="Ribeiro M.D.O."/>
            <person name="Barcelos I."/>
            <person name="Sayao Souza K."/>
            <person name="Monti F."/>
            <person name="Melo U.S."/>
            <person name="Amorim S."/>
            <person name="Silva L.G.L."/>
            <person name="Macedo-Souza L.I."/>
            <person name="Vianna-Morgante A.M."/>
            <person name="Hirano M."/>
            <person name="Van der Knaap M.S."/>
            <person name="Lill R."/>
            <person name="Vainzof M."/>
            <person name="Oldfors A."/>
            <person name="Houlden H."/>
            <person name="Kok F."/>
        </authorList>
    </citation>
    <scope>INVOLVEMENT IN MEOAL</scope>
    <scope>VARIANT MEOAL LEU-141</scope>
    <scope>CHARACTERIZATION OF VARIANT MEOAL LEU-141</scope>
    <scope>TISSUE SPECIFICITY</scope>
</reference>
<accession>Q6P4F2</accession>
<accession>B7Z6L7</accession>
<accession>Q8N8B8</accession>
<keyword id="KW-0001">2Fe-2S</keyword>
<keyword id="KW-0002">3D-structure</keyword>
<keyword id="KW-0025">Alternative splicing</keyword>
<keyword id="KW-0225">Disease variant</keyword>
<keyword id="KW-0249">Electron transport</keyword>
<keyword id="KW-0408">Iron</keyword>
<keyword id="KW-0411">Iron-sulfur</keyword>
<keyword id="KW-0479">Metal-binding</keyword>
<keyword id="KW-0496">Mitochondrion</keyword>
<keyword id="KW-1274">Primary mitochondrial disease</keyword>
<keyword id="KW-1267">Proteomics identification</keyword>
<keyword id="KW-1185">Reference proteome</keyword>
<keyword id="KW-0809">Transit peptide</keyword>
<keyword id="KW-0813">Transport</keyword>
<name>FDX2_HUMAN</name>
<evidence type="ECO:0000250" key="1">
    <source>
        <dbReference type="UniProtKB" id="P10109"/>
    </source>
</evidence>
<evidence type="ECO:0000250" key="2">
    <source>
        <dbReference type="UniProtKB" id="Q9H1K1"/>
    </source>
</evidence>
<evidence type="ECO:0000255" key="3"/>
<evidence type="ECO:0000255" key="4">
    <source>
        <dbReference type="PROSITE-ProRule" id="PRU00465"/>
    </source>
</evidence>
<evidence type="ECO:0000256" key="5">
    <source>
        <dbReference type="SAM" id="MobiDB-lite"/>
    </source>
</evidence>
<evidence type="ECO:0000269" key="6">
    <source>
    </source>
</evidence>
<evidence type="ECO:0000269" key="7">
    <source>
    </source>
</evidence>
<evidence type="ECO:0000269" key="8">
    <source>
    </source>
</evidence>
<evidence type="ECO:0000269" key="9">
    <source>
    </source>
</evidence>
<evidence type="ECO:0000269" key="10">
    <source>
    </source>
</evidence>
<evidence type="ECO:0000269" key="11">
    <source>
    </source>
</evidence>
<evidence type="ECO:0000269" key="12">
    <source ref="9"/>
</evidence>
<evidence type="ECO:0000303" key="13">
    <source>
    </source>
</evidence>
<evidence type="ECO:0000303" key="14">
    <source>
    </source>
</evidence>
<evidence type="ECO:0000305" key="15"/>
<evidence type="ECO:0000305" key="16">
    <source>
    </source>
</evidence>
<evidence type="ECO:0000312" key="17">
    <source>
        <dbReference type="HGNC" id="HGNC:30546"/>
    </source>
</evidence>
<evidence type="ECO:0007744" key="18">
    <source>
        <dbReference type="PDB" id="2Y5C"/>
    </source>
</evidence>
<evidence type="ECO:0007829" key="19">
    <source>
        <dbReference type="PDB" id="2Y5C"/>
    </source>
</evidence>